<protein>
    <recommendedName>
        <fullName>Cucurbitadienol synthase</fullName>
        <ecNumber>5.4.99.33</ecNumber>
    </recommendedName>
</protein>
<gene>
    <name type="primary">CPQ</name>
</gene>
<dbReference type="EC" id="5.4.99.33"/>
<dbReference type="EMBL" id="AB116238">
    <property type="protein sequence ID" value="BAD34645.1"/>
    <property type="molecule type" value="mRNA"/>
</dbReference>
<dbReference type="SMR" id="Q6BE24"/>
<dbReference type="KEGG" id="ag:BAD34645"/>
<dbReference type="BioCyc" id="MetaCyc:MONOMER-16525"/>
<dbReference type="BRENDA" id="5.4.99.33">
    <property type="organism ID" value="1740"/>
</dbReference>
<dbReference type="GO" id="GO:0005811">
    <property type="term" value="C:lipid droplet"/>
    <property type="evidence" value="ECO:0007669"/>
    <property type="project" value="InterPro"/>
</dbReference>
<dbReference type="GO" id="GO:0034076">
    <property type="term" value="F:cucurbitadienol synthase activity"/>
    <property type="evidence" value="ECO:0000314"/>
    <property type="project" value="UniProtKB"/>
</dbReference>
<dbReference type="GO" id="GO:0016104">
    <property type="term" value="P:triterpenoid biosynthetic process"/>
    <property type="evidence" value="ECO:0007669"/>
    <property type="project" value="InterPro"/>
</dbReference>
<dbReference type="CDD" id="cd02892">
    <property type="entry name" value="SQCY_1"/>
    <property type="match status" value="1"/>
</dbReference>
<dbReference type="FunFam" id="1.50.10.20:FF:000002">
    <property type="entry name" value="Terpene cyclase/mutase family member"/>
    <property type="match status" value="1"/>
</dbReference>
<dbReference type="FunFam" id="1.50.10.20:FF:000022">
    <property type="entry name" value="Terpene cyclase/mutase family member"/>
    <property type="match status" value="1"/>
</dbReference>
<dbReference type="Gene3D" id="1.50.10.20">
    <property type="match status" value="2"/>
</dbReference>
<dbReference type="InterPro" id="IPR032696">
    <property type="entry name" value="SQ_cyclase_C"/>
</dbReference>
<dbReference type="InterPro" id="IPR032697">
    <property type="entry name" value="SQ_cyclase_N"/>
</dbReference>
<dbReference type="InterPro" id="IPR018333">
    <property type="entry name" value="Squalene_cyclase"/>
</dbReference>
<dbReference type="InterPro" id="IPR002365">
    <property type="entry name" value="Terpene_synthase_CS"/>
</dbReference>
<dbReference type="InterPro" id="IPR008930">
    <property type="entry name" value="Terpenoid_cyclase/PrenylTrfase"/>
</dbReference>
<dbReference type="NCBIfam" id="TIGR01787">
    <property type="entry name" value="squalene_cyclas"/>
    <property type="match status" value="1"/>
</dbReference>
<dbReference type="PANTHER" id="PTHR11764">
    <property type="entry name" value="TERPENE CYCLASE/MUTASE FAMILY MEMBER"/>
    <property type="match status" value="1"/>
</dbReference>
<dbReference type="PANTHER" id="PTHR11764:SF85">
    <property type="entry name" value="TERPENE CYCLASE_MUTASE FAMILY MEMBER"/>
    <property type="match status" value="1"/>
</dbReference>
<dbReference type="Pfam" id="PF13243">
    <property type="entry name" value="SQHop_cyclase_C"/>
    <property type="match status" value="1"/>
</dbReference>
<dbReference type="Pfam" id="PF13249">
    <property type="entry name" value="SQHop_cyclase_N"/>
    <property type="match status" value="1"/>
</dbReference>
<dbReference type="SUPFAM" id="SSF48239">
    <property type="entry name" value="Terpenoid cyclases/Protein prenyltransferases"/>
    <property type="match status" value="2"/>
</dbReference>
<dbReference type="PROSITE" id="PS01074">
    <property type="entry name" value="TERPENE_SYNTHASES"/>
    <property type="match status" value="1"/>
</dbReference>
<feature type="chain" id="PRO_0000412984" description="Cucurbitadienol synthase">
    <location>
        <begin position="1"/>
        <end position="764"/>
    </location>
</feature>
<feature type="repeat" description="PFTB 1">
    <location>
        <begin position="104"/>
        <end position="146"/>
    </location>
</feature>
<feature type="repeat" description="PFTB 2">
    <location>
        <begin position="154"/>
        <end position="195"/>
    </location>
</feature>
<feature type="repeat" description="PFTB 3">
    <location>
        <begin position="520"/>
        <end position="565"/>
    </location>
</feature>
<feature type="repeat" description="PFTB 4">
    <location>
        <begin position="597"/>
        <end position="637"/>
    </location>
</feature>
<feature type="repeat" description="PFTB 5">
    <location>
        <begin position="646"/>
        <end position="687"/>
    </location>
</feature>
<feature type="active site" description="Proton donor" evidence="1">
    <location>
        <position position="491"/>
    </location>
</feature>
<feature type="mutagenesis site" description="No change of product-specificity. No change of product-specificity; when associated with V-489.">
    <original>L</original>
    <variation>P</variation>
    <location>
        <position position="488"/>
    </location>
</feature>
<feature type="mutagenesis site" description="No change of product-specificity. No change of product-specificity; when associated with P-488.">
    <original>I</original>
    <variation>V</variation>
    <location>
        <position position="489"/>
    </location>
</feature>
<organism>
    <name type="scientific">Cucurbita pepo</name>
    <name type="common">Vegetable marrow</name>
    <name type="synonym">Summer squash</name>
    <dbReference type="NCBI Taxonomy" id="3663"/>
    <lineage>
        <taxon>Eukaryota</taxon>
        <taxon>Viridiplantae</taxon>
        <taxon>Streptophyta</taxon>
        <taxon>Embryophyta</taxon>
        <taxon>Tracheophyta</taxon>
        <taxon>Spermatophyta</taxon>
        <taxon>Magnoliopsida</taxon>
        <taxon>eudicotyledons</taxon>
        <taxon>Gunneridae</taxon>
        <taxon>Pentapetalae</taxon>
        <taxon>rosids</taxon>
        <taxon>fabids</taxon>
        <taxon>Cucurbitales</taxon>
        <taxon>Cucurbitaceae</taxon>
        <taxon>Cucurbiteae</taxon>
        <taxon>Cucurbita</taxon>
    </lineage>
</organism>
<name>CUCS_CUCPE</name>
<sequence length="764" mass="86517">MWRLKVGAESVGEEDEKWVKSVSNHLGRQVWEFCADAAADTPHQLLQIQNARNHFHHNRFHRKQSSDLFLAIQYEKEIAKGAKGGAVKVKEGEEVGKEAVKSTLERALGFYSAVQTRDGNWASDLGGPLFLLPGLVIALHVTGVLNSVLSKHHRVEMCRYLYNHQNEDGGWGLHIEGTSTMFGSALNYVALRLLGEDADGGDGGAMTKARAWILERGGATAITSWGKLWLSVLGVYEWSGNNPLPPEFWLLPYSLPFHPGRMWCHCRMVYLPMSYLYGKRFVGPITPKVLSLRQELYTIPYHEIDWNKSRNTCAKEDLYYPHPKMQDILWGSIYHVYEPLFTRWPGKRLREKALQAAMKHIHYEDENSRYICLGPVNKVLNMLCCWVEDPYSDAFKLHLQRVHDYLWVAEDGMRMQGYNGSQLWDTAFSIQAIVATKLVDSYAPTLRKAHDFVKDSQIQEDCPGDPNVWFRHIHKGAWPLSTRDHGWLISDCTAEGLKASLMLSKLPSTMVGEPLEKNRLCDAVNVLLSLQNDNGGFASYELTRSYPWLELINPAETFGDIVIDYPYVECTAATMEALTLFKKLHPGHRTKEIDTAIGKAANFLEKMQRADGSWYGCWGVCFTYAGWFGIKGLVAAGRTYNSCLAIRKACEFLLSKELPGGGWGESYLSCQNKVYTNLEGNKPHLVNTAWVLMALIEAGQGERDPAPLHRAARLLMNSQLENGDFVQQEIMGVFNKNCMITYAAYRNIFPIWALGEYCHRVLTE</sequence>
<keyword id="KW-0413">Isomerase</keyword>
<keyword id="KW-0677">Repeat</keyword>
<comment type="function">
    <text evidence="2">Oxidosqualene cyclase involved in the biosynthesis of the highly oxygenated tetracyclic triterpenes cucurbitacins. Converts oxidosqualene to cucurbitadienol and does not produce lanosterol.</text>
</comment>
<comment type="catalytic activity">
    <reaction evidence="2">
        <text>(S)-2,3-epoxysqualene = cucurbitadienol</text>
        <dbReference type="Rhea" id="RHEA:30999"/>
        <dbReference type="ChEBI" id="CHEBI:15441"/>
        <dbReference type="ChEBI" id="CHEBI:62456"/>
        <dbReference type="EC" id="5.4.99.33"/>
    </reaction>
</comment>
<comment type="similarity">
    <text evidence="3">Belongs to the terpene cyclase/mutase family.</text>
</comment>
<proteinExistence type="evidence at protein level"/>
<reference key="1">
    <citation type="journal article" date="2004" name="Tetrahedron">
        <title>Cucurbitadienol synthase, the first committed enzyme for cucurbitacin biosynthesis, is a distinct enzyme from cycloartenol synthase for phytosterol biosynthesis.</title>
        <authorList>
            <person name="Shibuya M."/>
            <person name="Adachi S."/>
            <person name="Ebizuka Y."/>
        </authorList>
    </citation>
    <scope>NUCLEOTIDE SEQUENCE [MRNA]</scope>
    <scope>FUNCTION</scope>
    <scope>CATALYTIC ACTIVITY</scope>
    <scope>MUTAGENESIS OF 488-LEU-ILE-489</scope>
</reference>
<evidence type="ECO:0000250" key="1">
    <source>
        <dbReference type="UniProtKB" id="P48449"/>
    </source>
</evidence>
<evidence type="ECO:0000269" key="2">
    <source ref="1"/>
</evidence>
<evidence type="ECO:0000305" key="3"/>
<accession>Q6BE24</accession>